<feature type="chain" id="PRO_0000062340" description="Ribulose bisphosphate carboxylase large chain">
    <location>
        <begin position="1" status="less than"/>
        <end position="466"/>
    </location>
</feature>
<feature type="active site" description="Proton acceptor" evidence="1">
    <location>
        <position position="166"/>
    </location>
</feature>
<feature type="active site" description="Proton acceptor" evidence="1">
    <location>
        <position position="285"/>
    </location>
</feature>
<feature type="binding site" description="in homodimeric partner" evidence="1">
    <location>
        <position position="114"/>
    </location>
    <ligand>
        <name>substrate</name>
    </ligand>
</feature>
<feature type="binding site" evidence="1">
    <location>
        <position position="164"/>
    </location>
    <ligand>
        <name>substrate</name>
    </ligand>
</feature>
<feature type="binding site" evidence="1">
    <location>
        <position position="168"/>
    </location>
    <ligand>
        <name>substrate</name>
    </ligand>
</feature>
<feature type="binding site" description="via carbamate group" evidence="1">
    <location>
        <position position="192"/>
    </location>
    <ligand>
        <name>Mg(2+)</name>
        <dbReference type="ChEBI" id="CHEBI:18420"/>
    </ligand>
</feature>
<feature type="binding site" evidence="1">
    <location>
        <position position="194"/>
    </location>
    <ligand>
        <name>Mg(2+)</name>
        <dbReference type="ChEBI" id="CHEBI:18420"/>
    </ligand>
</feature>
<feature type="binding site" evidence="1">
    <location>
        <position position="195"/>
    </location>
    <ligand>
        <name>Mg(2+)</name>
        <dbReference type="ChEBI" id="CHEBI:18420"/>
    </ligand>
</feature>
<feature type="binding site" evidence="1">
    <location>
        <position position="286"/>
    </location>
    <ligand>
        <name>substrate</name>
    </ligand>
</feature>
<feature type="binding site" evidence="1">
    <location>
        <position position="318"/>
    </location>
    <ligand>
        <name>substrate</name>
    </ligand>
</feature>
<feature type="binding site" evidence="1">
    <location>
        <position position="370"/>
    </location>
    <ligand>
        <name>substrate</name>
    </ligand>
</feature>
<feature type="site" description="Transition state stabilizer" evidence="1">
    <location>
        <position position="325"/>
    </location>
</feature>
<feature type="modified residue" description="N6,N6,N6-trimethyllysine" evidence="1">
    <location>
        <position position="5"/>
    </location>
</feature>
<feature type="modified residue" description="N6-carboxylysine" evidence="1">
    <location>
        <position position="192"/>
    </location>
</feature>
<feature type="disulfide bond" description="Interchain; in linked form" evidence="1">
    <location>
        <position position="238"/>
    </location>
</feature>
<feature type="non-terminal residue">
    <location>
        <position position="1"/>
    </location>
</feature>
<protein>
    <recommendedName>
        <fullName evidence="1">Ribulose bisphosphate carboxylase large chain</fullName>
        <shortName evidence="1">RuBisCO large subunit</shortName>
        <ecNumber evidence="1">4.1.1.39</ecNumber>
    </recommendedName>
</protein>
<reference key="1">
    <citation type="journal article" date="1998" name="Am. J. Bot.">
        <title>Morphology and molecular data in phylogenetic fraternity: the tribe Wrightieae (Apocynaceae) revisited.</title>
        <authorList>
            <person name="Sennblad B."/>
            <person name="Endress M.E."/>
            <person name="Bremer B."/>
        </authorList>
    </citation>
    <scope>NUCLEOTIDE SEQUENCE [GENOMIC DNA]</scope>
</reference>
<organism>
    <name type="scientific">Adenium obesum</name>
    <name type="common">Desert rose</name>
    <name type="synonym">Nerium obesum</name>
    <dbReference type="NCBI Taxonomy" id="69375"/>
    <lineage>
        <taxon>Eukaryota</taxon>
        <taxon>Viridiplantae</taxon>
        <taxon>Streptophyta</taxon>
        <taxon>Embryophyta</taxon>
        <taxon>Tracheophyta</taxon>
        <taxon>Spermatophyta</taxon>
        <taxon>Magnoliopsida</taxon>
        <taxon>eudicotyledons</taxon>
        <taxon>Gunneridae</taxon>
        <taxon>Pentapetalae</taxon>
        <taxon>asterids</taxon>
        <taxon>lamiids</taxon>
        <taxon>Gentianales</taxon>
        <taxon>Apocynaceae</taxon>
        <taxon>Apocynoideae</taxon>
        <taxon>Nerieae</taxon>
        <taxon>Neriinae</taxon>
        <taxon>Adenium</taxon>
    </lineage>
</organism>
<evidence type="ECO:0000255" key="1">
    <source>
        <dbReference type="HAMAP-Rule" id="MF_01338"/>
    </source>
</evidence>
<gene>
    <name evidence="1" type="primary">rbcL</name>
</gene>
<sequence>SVGFKAGVKEYKLTYYTPEYETKDTDILAAFRVTPQPGVPPEEAGAAVAAESSTGTWTTVWTDGLTSLDRYKGRCYHIEPVPGEEDQYIAYVAYPLDLFEEGSVTNMLTSIVGNVFGFKALRALRLEDLRIPPAYIKTFQGPPHGIQVERDKLNKYGRPLLGCTIKPKLGLSAKNYGRAVYECLRGGLDFTKDDENVNSQPFMRWRDRFLFCAEAIFKAQAETGEIKGHYLNATAGTCEEMYKRAVFARELGAPIVMHDYLTGGFTANTSLAHYCRDNGLLLHIHRAMHAVIDRQKNHGMHFRVLAKALRMSGGDHIHAGTVVGKLEGERDITLGFVDLLRDDFIEKDRSRGIYFTQDWVSLPGVLAVASGGIHVWHMPALTEIFGDDSVLQFGGGTLGHPWGNAPGAVANRVALEACVQARNEGRDLAVEGNEIIREASKWSPELAAACEVWKEIRFNFKAVDTL</sequence>
<accession>O99000</accession>
<comment type="function">
    <text evidence="1">RuBisCO catalyzes two reactions: the carboxylation of D-ribulose 1,5-bisphosphate, the primary event in carbon dioxide fixation, as well as the oxidative fragmentation of the pentose substrate in the photorespiration process. Both reactions occur simultaneously and in competition at the same active site.</text>
</comment>
<comment type="catalytic activity">
    <reaction evidence="1">
        <text>2 (2R)-3-phosphoglycerate + 2 H(+) = D-ribulose 1,5-bisphosphate + CO2 + H2O</text>
        <dbReference type="Rhea" id="RHEA:23124"/>
        <dbReference type="ChEBI" id="CHEBI:15377"/>
        <dbReference type="ChEBI" id="CHEBI:15378"/>
        <dbReference type="ChEBI" id="CHEBI:16526"/>
        <dbReference type="ChEBI" id="CHEBI:57870"/>
        <dbReference type="ChEBI" id="CHEBI:58272"/>
        <dbReference type="EC" id="4.1.1.39"/>
    </reaction>
</comment>
<comment type="catalytic activity">
    <reaction evidence="1">
        <text>D-ribulose 1,5-bisphosphate + O2 = 2-phosphoglycolate + (2R)-3-phosphoglycerate + 2 H(+)</text>
        <dbReference type="Rhea" id="RHEA:36631"/>
        <dbReference type="ChEBI" id="CHEBI:15378"/>
        <dbReference type="ChEBI" id="CHEBI:15379"/>
        <dbReference type="ChEBI" id="CHEBI:57870"/>
        <dbReference type="ChEBI" id="CHEBI:58033"/>
        <dbReference type="ChEBI" id="CHEBI:58272"/>
    </reaction>
</comment>
<comment type="cofactor">
    <cofactor evidence="1">
        <name>Mg(2+)</name>
        <dbReference type="ChEBI" id="CHEBI:18420"/>
    </cofactor>
    <text evidence="1">Binds 1 Mg(2+) ion per subunit.</text>
</comment>
<comment type="subunit">
    <text evidence="1">Heterohexadecamer of 8 large chains and 8 small chains; disulfide-linked. The disulfide link is formed within the large subunit homodimers.</text>
</comment>
<comment type="subcellular location">
    <subcellularLocation>
        <location>Plastid</location>
        <location>Chloroplast</location>
    </subcellularLocation>
</comment>
<comment type="PTM">
    <text evidence="1">The disulfide bond which can form in the large chain dimeric partners within the hexadecamer appears to be associated with oxidative stress and protein turnover.</text>
</comment>
<comment type="miscellaneous">
    <text evidence="1">The basic functional RuBisCO is composed of a large chain homodimer in a 'head-to-tail' conformation. In form I RuBisCO this homodimer is arranged in a barrel-like tetramer with the small subunits forming a tetrameric 'cap' on each end of the 'barrel'.</text>
</comment>
<comment type="similarity">
    <text evidence="1">Belongs to the RuBisCO large chain family. Type I subfamily.</text>
</comment>
<name>RBL_ADEOB</name>
<keyword id="KW-0113">Calvin cycle</keyword>
<keyword id="KW-0120">Carbon dioxide fixation</keyword>
<keyword id="KW-0150">Chloroplast</keyword>
<keyword id="KW-1015">Disulfide bond</keyword>
<keyword id="KW-0456">Lyase</keyword>
<keyword id="KW-0460">Magnesium</keyword>
<keyword id="KW-0479">Metal-binding</keyword>
<keyword id="KW-0488">Methylation</keyword>
<keyword id="KW-0503">Monooxygenase</keyword>
<keyword id="KW-0560">Oxidoreductase</keyword>
<keyword id="KW-0601">Photorespiration</keyword>
<keyword id="KW-0602">Photosynthesis</keyword>
<keyword id="KW-0934">Plastid</keyword>
<dbReference type="EC" id="4.1.1.39" evidence="1"/>
<dbReference type="EMBL" id="AJ002880">
    <property type="protein sequence ID" value="CAB38851.1"/>
    <property type="molecule type" value="Genomic_DNA"/>
</dbReference>
<dbReference type="SMR" id="O99000"/>
<dbReference type="GO" id="GO:0009507">
    <property type="term" value="C:chloroplast"/>
    <property type="evidence" value="ECO:0007669"/>
    <property type="project" value="UniProtKB-SubCell"/>
</dbReference>
<dbReference type="GO" id="GO:0000287">
    <property type="term" value="F:magnesium ion binding"/>
    <property type="evidence" value="ECO:0007669"/>
    <property type="project" value="InterPro"/>
</dbReference>
<dbReference type="GO" id="GO:0004497">
    <property type="term" value="F:monooxygenase activity"/>
    <property type="evidence" value="ECO:0007669"/>
    <property type="project" value="UniProtKB-KW"/>
</dbReference>
<dbReference type="GO" id="GO:0016984">
    <property type="term" value="F:ribulose-bisphosphate carboxylase activity"/>
    <property type="evidence" value="ECO:0007669"/>
    <property type="project" value="UniProtKB-EC"/>
</dbReference>
<dbReference type="GO" id="GO:0009853">
    <property type="term" value="P:photorespiration"/>
    <property type="evidence" value="ECO:0007669"/>
    <property type="project" value="UniProtKB-KW"/>
</dbReference>
<dbReference type="GO" id="GO:0019253">
    <property type="term" value="P:reductive pentose-phosphate cycle"/>
    <property type="evidence" value="ECO:0007669"/>
    <property type="project" value="UniProtKB-KW"/>
</dbReference>
<dbReference type="CDD" id="cd08212">
    <property type="entry name" value="RuBisCO_large_I"/>
    <property type="match status" value="1"/>
</dbReference>
<dbReference type="FunFam" id="3.20.20.110:FF:000001">
    <property type="entry name" value="Ribulose bisphosphate carboxylase large chain"/>
    <property type="match status" value="1"/>
</dbReference>
<dbReference type="FunFam" id="3.30.70.150:FF:000001">
    <property type="entry name" value="Ribulose bisphosphate carboxylase large chain"/>
    <property type="match status" value="1"/>
</dbReference>
<dbReference type="Gene3D" id="3.20.20.110">
    <property type="entry name" value="Ribulose bisphosphate carboxylase, large subunit, C-terminal domain"/>
    <property type="match status" value="1"/>
</dbReference>
<dbReference type="Gene3D" id="3.30.70.150">
    <property type="entry name" value="RuBisCO large subunit, N-terminal domain"/>
    <property type="match status" value="1"/>
</dbReference>
<dbReference type="HAMAP" id="MF_01338">
    <property type="entry name" value="RuBisCO_L_type1"/>
    <property type="match status" value="1"/>
</dbReference>
<dbReference type="InterPro" id="IPR033966">
    <property type="entry name" value="RuBisCO"/>
</dbReference>
<dbReference type="InterPro" id="IPR020878">
    <property type="entry name" value="RuBisCo_large_chain_AS"/>
</dbReference>
<dbReference type="InterPro" id="IPR000685">
    <property type="entry name" value="RuBisCO_lsu_C"/>
</dbReference>
<dbReference type="InterPro" id="IPR036376">
    <property type="entry name" value="RuBisCO_lsu_C_sf"/>
</dbReference>
<dbReference type="InterPro" id="IPR017443">
    <property type="entry name" value="RuBisCO_lsu_fd_N"/>
</dbReference>
<dbReference type="InterPro" id="IPR036422">
    <property type="entry name" value="RuBisCO_lsu_N_sf"/>
</dbReference>
<dbReference type="InterPro" id="IPR020888">
    <property type="entry name" value="RuBisCO_lsuI"/>
</dbReference>
<dbReference type="NCBIfam" id="NF003252">
    <property type="entry name" value="PRK04208.1"/>
    <property type="match status" value="1"/>
</dbReference>
<dbReference type="PANTHER" id="PTHR42704">
    <property type="entry name" value="RIBULOSE BISPHOSPHATE CARBOXYLASE"/>
    <property type="match status" value="1"/>
</dbReference>
<dbReference type="PANTHER" id="PTHR42704:SF15">
    <property type="entry name" value="RIBULOSE BISPHOSPHATE CARBOXYLASE LARGE CHAIN"/>
    <property type="match status" value="1"/>
</dbReference>
<dbReference type="Pfam" id="PF00016">
    <property type="entry name" value="RuBisCO_large"/>
    <property type="match status" value="1"/>
</dbReference>
<dbReference type="Pfam" id="PF02788">
    <property type="entry name" value="RuBisCO_large_N"/>
    <property type="match status" value="1"/>
</dbReference>
<dbReference type="SFLD" id="SFLDG01052">
    <property type="entry name" value="RuBisCO"/>
    <property type="match status" value="1"/>
</dbReference>
<dbReference type="SFLD" id="SFLDS00014">
    <property type="entry name" value="RuBisCO"/>
    <property type="match status" value="1"/>
</dbReference>
<dbReference type="SFLD" id="SFLDG00301">
    <property type="entry name" value="RuBisCO-like_proteins"/>
    <property type="match status" value="1"/>
</dbReference>
<dbReference type="SUPFAM" id="SSF51649">
    <property type="entry name" value="RuBisCo, C-terminal domain"/>
    <property type="match status" value="1"/>
</dbReference>
<dbReference type="SUPFAM" id="SSF54966">
    <property type="entry name" value="RuBisCO, large subunit, small (N-terminal) domain"/>
    <property type="match status" value="1"/>
</dbReference>
<dbReference type="PROSITE" id="PS00157">
    <property type="entry name" value="RUBISCO_LARGE"/>
    <property type="match status" value="1"/>
</dbReference>
<proteinExistence type="inferred from homology"/>
<geneLocation type="chloroplast"/>